<keyword id="KW-0131">Cell cycle</keyword>
<keyword id="KW-0132">Cell division</keyword>
<keyword id="KW-0133">Cell shape</keyword>
<keyword id="KW-0961">Cell wall biogenesis/degradation</keyword>
<keyword id="KW-0963">Cytoplasm</keyword>
<keyword id="KW-0573">Peptidoglycan synthesis</keyword>
<keyword id="KW-0670">Pyruvate</keyword>
<keyword id="KW-1185">Reference proteome</keyword>
<keyword id="KW-0808">Transferase</keyword>
<reference key="1">
    <citation type="journal article" date="2005" name="Science">
        <title>Genome streamlining in a cosmopolitan oceanic bacterium.</title>
        <authorList>
            <person name="Giovannoni S.J."/>
            <person name="Tripp H.J."/>
            <person name="Givan S."/>
            <person name="Podar M."/>
            <person name="Vergin K.L."/>
            <person name="Baptista D."/>
            <person name="Bibbs L."/>
            <person name="Eads J."/>
            <person name="Richardson T.H."/>
            <person name="Noordewier M."/>
            <person name="Rappe M.S."/>
            <person name="Short J.M."/>
            <person name="Carrington J.C."/>
            <person name="Mathur E.J."/>
        </authorList>
    </citation>
    <scope>NUCLEOTIDE SEQUENCE [LARGE SCALE GENOMIC DNA]</scope>
    <source>
        <strain>HTCC1062</strain>
    </source>
</reference>
<gene>
    <name evidence="1" type="primary">murA</name>
    <name type="ordered locus">SAR11_0473</name>
</gene>
<feature type="chain" id="PRO_0000231234" description="UDP-N-acetylglucosamine 1-carboxyvinyltransferase">
    <location>
        <begin position="1"/>
        <end position="417"/>
    </location>
</feature>
<feature type="active site" description="Proton donor" evidence="1">
    <location>
        <position position="116"/>
    </location>
</feature>
<feature type="binding site" evidence="1">
    <location>
        <begin position="22"/>
        <end position="23"/>
    </location>
    <ligand>
        <name>phosphoenolpyruvate</name>
        <dbReference type="ChEBI" id="CHEBI:58702"/>
    </ligand>
</feature>
<feature type="binding site" evidence="1">
    <location>
        <position position="92"/>
    </location>
    <ligand>
        <name>UDP-N-acetyl-alpha-D-glucosamine</name>
        <dbReference type="ChEBI" id="CHEBI:57705"/>
    </ligand>
</feature>
<feature type="binding site" evidence="1">
    <location>
        <begin position="161"/>
        <end position="164"/>
    </location>
    <ligand>
        <name>UDP-N-acetyl-alpha-D-glucosamine</name>
        <dbReference type="ChEBI" id="CHEBI:57705"/>
    </ligand>
</feature>
<feature type="binding site" evidence="1">
    <location>
        <position position="305"/>
    </location>
    <ligand>
        <name>UDP-N-acetyl-alpha-D-glucosamine</name>
        <dbReference type="ChEBI" id="CHEBI:57705"/>
    </ligand>
</feature>
<feature type="binding site" evidence="1">
    <location>
        <position position="327"/>
    </location>
    <ligand>
        <name>UDP-N-acetyl-alpha-D-glucosamine</name>
        <dbReference type="ChEBI" id="CHEBI:57705"/>
    </ligand>
</feature>
<feature type="modified residue" description="2-(S-cysteinyl)pyruvic acid O-phosphothioketal" evidence="1">
    <location>
        <position position="116"/>
    </location>
</feature>
<dbReference type="EC" id="2.5.1.7" evidence="1"/>
<dbReference type="EMBL" id="CP000084">
    <property type="protein sequence ID" value="AAZ21295.1"/>
    <property type="molecule type" value="Genomic_DNA"/>
</dbReference>
<dbReference type="RefSeq" id="WP_011281735.1">
    <property type="nucleotide sequence ID" value="NC_007205.1"/>
</dbReference>
<dbReference type="SMR" id="Q4FNE4"/>
<dbReference type="STRING" id="335992.SAR11_0473"/>
<dbReference type="GeneID" id="66294973"/>
<dbReference type="KEGG" id="pub:SAR11_0473"/>
<dbReference type="eggNOG" id="COG0766">
    <property type="taxonomic scope" value="Bacteria"/>
</dbReference>
<dbReference type="HOGENOM" id="CLU_027387_0_0_5"/>
<dbReference type="OrthoDB" id="9803760at2"/>
<dbReference type="UniPathway" id="UPA00219"/>
<dbReference type="Proteomes" id="UP000002528">
    <property type="component" value="Chromosome"/>
</dbReference>
<dbReference type="GO" id="GO:0005737">
    <property type="term" value="C:cytoplasm"/>
    <property type="evidence" value="ECO:0007669"/>
    <property type="project" value="UniProtKB-SubCell"/>
</dbReference>
<dbReference type="GO" id="GO:0008760">
    <property type="term" value="F:UDP-N-acetylglucosamine 1-carboxyvinyltransferase activity"/>
    <property type="evidence" value="ECO:0007669"/>
    <property type="project" value="UniProtKB-UniRule"/>
</dbReference>
<dbReference type="GO" id="GO:0051301">
    <property type="term" value="P:cell division"/>
    <property type="evidence" value="ECO:0007669"/>
    <property type="project" value="UniProtKB-KW"/>
</dbReference>
<dbReference type="GO" id="GO:0071555">
    <property type="term" value="P:cell wall organization"/>
    <property type="evidence" value="ECO:0007669"/>
    <property type="project" value="UniProtKB-KW"/>
</dbReference>
<dbReference type="GO" id="GO:0009252">
    <property type="term" value="P:peptidoglycan biosynthetic process"/>
    <property type="evidence" value="ECO:0007669"/>
    <property type="project" value="UniProtKB-UniRule"/>
</dbReference>
<dbReference type="GO" id="GO:0008360">
    <property type="term" value="P:regulation of cell shape"/>
    <property type="evidence" value="ECO:0007669"/>
    <property type="project" value="UniProtKB-KW"/>
</dbReference>
<dbReference type="GO" id="GO:0019277">
    <property type="term" value="P:UDP-N-acetylgalactosamine biosynthetic process"/>
    <property type="evidence" value="ECO:0007669"/>
    <property type="project" value="InterPro"/>
</dbReference>
<dbReference type="CDD" id="cd01555">
    <property type="entry name" value="UdpNAET"/>
    <property type="match status" value="1"/>
</dbReference>
<dbReference type="Gene3D" id="3.65.10.10">
    <property type="entry name" value="Enolpyruvate transferase domain"/>
    <property type="match status" value="2"/>
</dbReference>
<dbReference type="HAMAP" id="MF_00111">
    <property type="entry name" value="MurA"/>
    <property type="match status" value="1"/>
</dbReference>
<dbReference type="InterPro" id="IPR001986">
    <property type="entry name" value="Enolpyruvate_Tfrase_dom"/>
</dbReference>
<dbReference type="InterPro" id="IPR036968">
    <property type="entry name" value="Enolpyruvate_Tfrase_sf"/>
</dbReference>
<dbReference type="InterPro" id="IPR050068">
    <property type="entry name" value="MurA_subfamily"/>
</dbReference>
<dbReference type="InterPro" id="IPR013792">
    <property type="entry name" value="RNA3'P_cycl/enolpyr_Trfase_a/b"/>
</dbReference>
<dbReference type="InterPro" id="IPR005750">
    <property type="entry name" value="UDP_GlcNAc_COvinyl_MurA"/>
</dbReference>
<dbReference type="NCBIfam" id="TIGR01072">
    <property type="entry name" value="murA"/>
    <property type="match status" value="1"/>
</dbReference>
<dbReference type="NCBIfam" id="NF006873">
    <property type="entry name" value="PRK09369.1"/>
    <property type="match status" value="1"/>
</dbReference>
<dbReference type="PANTHER" id="PTHR43783">
    <property type="entry name" value="UDP-N-ACETYLGLUCOSAMINE 1-CARBOXYVINYLTRANSFERASE"/>
    <property type="match status" value="1"/>
</dbReference>
<dbReference type="PANTHER" id="PTHR43783:SF1">
    <property type="entry name" value="UDP-N-ACETYLGLUCOSAMINE 1-CARBOXYVINYLTRANSFERASE"/>
    <property type="match status" value="1"/>
</dbReference>
<dbReference type="Pfam" id="PF00275">
    <property type="entry name" value="EPSP_synthase"/>
    <property type="match status" value="1"/>
</dbReference>
<dbReference type="SUPFAM" id="SSF55205">
    <property type="entry name" value="EPT/RTPC-like"/>
    <property type="match status" value="1"/>
</dbReference>
<name>MURA_PELUB</name>
<organism>
    <name type="scientific">Pelagibacter ubique (strain HTCC1062)</name>
    <dbReference type="NCBI Taxonomy" id="335992"/>
    <lineage>
        <taxon>Bacteria</taxon>
        <taxon>Pseudomonadati</taxon>
        <taxon>Pseudomonadota</taxon>
        <taxon>Alphaproteobacteria</taxon>
        <taxon>Candidatus Pelagibacterales</taxon>
        <taxon>Candidatus Pelagibacteraceae</taxon>
        <taxon>Candidatus Pelagibacter</taxon>
    </lineage>
</organism>
<evidence type="ECO:0000255" key="1">
    <source>
        <dbReference type="HAMAP-Rule" id="MF_00111"/>
    </source>
</evidence>
<comment type="function">
    <text evidence="1">Cell wall formation. Adds enolpyruvyl to UDP-N-acetylglucosamine.</text>
</comment>
<comment type="catalytic activity">
    <reaction evidence="1">
        <text>phosphoenolpyruvate + UDP-N-acetyl-alpha-D-glucosamine = UDP-N-acetyl-3-O-(1-carboxyvinyl)-alpha-D-glucosamine + phosphate</text>
        <dbReference type="Rhea" id="RHEA:18681"/>
        <dbReference type="ChEBI" id="CHEBI:43474"/>
        <dbReference type="ChEBI" id="CHEBI:57705"/>
        <dbReference type="ChEBI" id="CHEBI:58702"/>
        <dbReference type="ChEBI" id="CHEBI:68483"/>
        <dbReference type="EC" id="2.5.1.7"/>
    </reaction>
</comment>
<comment type="pathway">
    <text evidence="1">Cell wall biogenesis; peptidoglycan biosynthesis.</text>
</comment>
<comment type="subcellular location">
    <subcellularLocation>
        <location evidence="1">Cytoplasm</location>
    </subcellularLocation>
</comment>
<comment type="similarity">
    <text evidence="1">Belongs to the EPSP synthase family. MurA subfamily.</text>
</comment>
<protein>
    <recommendedName>
        <fullName evidence="1">UDP-N-acetylglucosamine 1-carboxyvinyltransferase</fullName>
        <ecNumber evidence="1">2.5.1.7</ecNumber>
    </recommendedName>
    <alternativeName>
        <fullName evidence="1">Enoylpyruvate transferase</fullName>
    </alternativeName>
    <alternativeName>
        <fullName evidence="1">UDP-N-acetylglucosamine enolpyruvyl transferase</fullName>
        <shortName evidence="1">EPT</shortName>
    </alternativeName>
</protein>
<accession>Q4FNE4</accession>
<proteinExistence type="inferred from homology"/>
<sequence>MKKLEVFGAAKLKGQIRISGSKNASLPILAATLLSNKKISLANLPRVKDIETMILLLKSLGSIIEDNKKELIIKNTKQTKTFAAYSLVKTMRAGILVLGPLLAKFGKAKVSLPGGCAIGTRPVDIHLQALSKLGVKYKIIQGYVHANAPKGLIGANIKFPKVSVGATENLIIAACLAKGKTTLSNCAIEPEIKDLVNFLINMGCNIKWTAKRTVRIEGVNNLKELDYSVMPDRIEAGTYLIAAALTEGNLKITGIDPKIISTEINILKKVGSKITLKKNEILIQGSKKIKNINIKTSPYPGFPTDLQAQMMVLLCKANKRSHIKEEIFENRFMHVAELNRMGAKISINGNQASIEGNIKFEAAELMATDLRASVSLILAALAAKGKSVINRIYHLDRGYEDIEKKLKKVGAKIKRIN</sequence>